<gene>
    <name type="primary">UGT76E5</name>
    <name type="ordered locus">At3g46720</name>
    <name type="ORF">T6H20.250</name>
</gene>
<keyword id="KW-0328">Glycosyltransferase</keyword>
<keyword id="KW-1185">Reference proteome</keyword>
<keyword id="KW-0808">Transferase</keyword>
<organism>
    <name type="scientific">Arabidopsis thaliana</name>
    <name type="common">Mouse-ear cress</name>
    <dbReference type="NCBI Taxonomy" id="3702"/>
    <lineage>
        <taxon>Eukaryota</taxon>
        <taxon>Viridiplantae</taxon>
        <taxon>Streptophyta</taxon>
        <taxon>Embryophyta</taxon>
        <taxon>Tracheophyta</taxon>
        <taxon>Spermatophyta</taxon>
        <taxon>Magnoliopsida</taxon>
        <taxon>eudicotyledons</taxon>
        <taxon>Gunneridae</taxon>
        <taxon>Pentapetalae</taxon>
        <taxon>rosids</taxon>
        <taxon>malvids</taxon>
        <taxon>Brassicales</taxon>
        <taxon>Brassicaceae</taxon>
        <taxon>Camelineae</taxon>
        <taxon>Arabidopsis</taxon>
    </lineage>
</organism>
<dbReference type="EC" id="2.4.1.-"/>
<dbReference type="EMBL" id="AL096859">
    <property type="protein sequence ID" value="CAB51193.1"/>
    <property type="molecule type" value="Genomic_DNA"/>
</dbReference>
<dbReference type="EMBL" id="CP002686">
    <property type="protein sequence ID" value="AEE78197.1"/>
    <property type="molecule type" value="Genomic_DNA"/>
</dbReference>
<dbReference type="PIR" id="T12978">
    <property type="entry name" value="T12978"/>
</dbReference>
<dbReference type="RefSeq" id="NP_190256.1">
    <property type="nucleotide sequence ID" value="NM_114539.3"/>
</dbReference>
<dbReference type="SMR" id="Q9STE6"/>
<dbReference type="FunCoup" id="Q9STE6">
    <property type="interactions" value="201"/>
</dbReference>
<dbReference type="CAZy" id="GT1">
    <property type="family name" value="Glycosyltransferase Family 1"/>
</dbReference>
<dbReference type="iPTMnet" id="Q9STE6"/>
<dbReference type="PaxDb" id="3702-AT3G46720.1"/>
<dbReference type="ProteomicsDB" id="228714"/>
<dbReference type="EnsemblPlants" id="AT3G46720.1">
    <property type="protein sequence ID" value="AT3G46720.1"/>
    <property type="gene ID" value="AT3G46720"/>
</dbReference>
<dbReference type="GeneID" id="823825"/>
<dbReference type="Gramene" id="AT3G46720.1">
    <property type="protein sequence ID" value="AT3G46720.1"/>
    <property type="gene ID" value="AT3G46720"/>
</dbReference>
<dbReference type="KEGG" id="ath:AT3G46720"/>
<dbReference type="Araport" id="AT3G46720"/>
<dbReference type="TAIR" id="AT3G46720"/>
<dbReference type="eggNOG" id="KOG1192">
    <property type="taxonomic scope" value="Eukaryota"/>
</dbReference>
<dbReference type="HOGENOM" id="CLU_001724_0_0_1"/>
<dbReference type="InParanoid" id="Q9STE6"/>
<dbReference type="OMA" id="SATNHVC"/>
<dbReference type="PhylomeDB" id="Q9STE6"/>
<dbReference type="BioCyc" id="ARA:AT3G46720-MONOMER"/>
<dbReference type="PRO" id="PR:Q9STE6"/>
<dbReference type="Proteomes" id="UP000006548">
    <property type="component" value="Chromosome 3"/>
</dbReference>
<dbReference type="ExpressionAtlas" id="Q9STE6">
    <property type="expression patterns" value="baseline and differential"/>
</dbReference>
<dbReference type="GO" id="GO:0008194">
    <property type="term" value="F:UDP-glycosyltransferase activity"/>
    <property type="evidence" value="ECO:0007669"/>
    <property type="project" value="InterPro"/>
</dbReference>
<dbReference type="CDD" id="cd03784">
    <property type="entry name" value="GT1_Gtf-like"/>
    <property type="match status" value="1"/>
</dbReference>
<dbReference type="FunFam" id="3.40.50.2000:FF:000040">
    <property type="entry name" value="UDP-glycosyltransferase 76C1"/>
    <property type="match status" value="1"/>
</dbReference>
<dbReference type="FunFam" id="3.40.50.2000:FF:000151">
    <property type="entry name" value="UDP-glycosyltransferase 76E9"/>
    <property type="match status" value="1"/>
</dbReference>
<dbReference type="Gene3D" id="3.40.50.2000">
    <property type="entry name" value="Glycogen Phosphorylase B"/>
    <property type="match status" value="2"/>
</dbReference>
<dbReference type="InterPro" id="IPR002213">
    <property type="entry name" value="UDP_glucos_trans"/>
</dbReference>
<dbReference type="PANTHER" id="PTHR11926">
    <property type="entry name" value="GLUCOSYL/GLUCURONOSYL TRANSFERASES"/>
    <property type="match status" value="1"/>
</dbReference>
<dbReference type="PANTHER" id="PTHR11926:SF1482">
    <property type="entry name" value="UDP-GLYCOSYLTRANSFERASE 76E5"/>
    <property type="match status" value="1"/>
</dbReference>
<dbReference type="Pfam" id="PF00201">
    <property type="entry name" value="UDPGT"/>
    <property type="match status" value="1"/>
</dbReference>
<dbReference type="SUPFAM" id="SSF53756">
    <property type="entry name" value="UDP-Glycosyltransferase/glycogen phosphorylase"/>
    <property type="match status" value="1"/>
</dbReference>
<name>U76E5_ARATH</name>
<proteinExistence type="evidence at transcript level"/>
<sequence length="447" mass="49882">MEKNAEKKRIVLVPFPLQGHITPMMQLGQALNLKGFSITVALGDSNRVSSTQHFPGFQFVTIPETIPLSQHEALGVVEFVVTLNKTSETSFKDCIAHLLLQHGNDIACIIYDELMYFSEATAKDLRIPSVIFTTGSATNHVCSCILSKLNAEKFLIDMKDPEVQNMVVENLHPLKYKDLPTSGMGPLERFLEICAEVVNKRTASAVIINTSSCLESSSLSWLKQELSIPVYPLGPLHITTSANFSLLEEDRSCIEWLNKQKLRSVIYISVGSIAHMETKEVLEMAWGLYNSNQPFLWVIRPGTESMPVEVSKIVSERGCIVKWAPQNEVLVHPAVGGFWSHCGWNSTLESIVEGVPMICRPFNGEQKLNAMYIESVWRVGVLLQGEVERGCVERAVKRLIVDDEGVGMRERALVLKEKLNASVRSGGSSYNALDELVHYLEAEYRNT</sequence>
<protein>
    <recommendedName>
        <fullName>UDP-glycosyltransferase 76E5</fullName>
        <ecNumber>2.4.1.-</ecNumber>
    </recommendedName>
</protein>
<reference key="1">
    <citation type="journal article" date="2000" name="Nature">
        <title>Sequence and analysis of chromosome 3 of the plant Arabidopsis thaliana.</title>
        <authorList>
            <person name="Salanoubat M."/>
            <person name="Lemcke K."/>
            <person name="Rieger M."/>
            <person name="Ansorge W."/>
            <person name="Unseld M."/>
            <person name="Fartmann B."/>
            <person name="Valle G."/>
            <person name="Bloecker H."/>
            <person name="Perez-Alonso M."/>
            <person name="Obermaier B."/>
            <person name="Delseny M."/>
            <person name="Boutry M."/>
            <person name="Grivell L.A."/>
            <person name="Mache R."/>
            <person name="Puigdomenech P."/>
            <person name="De Simone V."/>
            <person name="Choisne N."/>
            <person name="Artiguenave F."/>
            <person name="Robert C."/>
            <person name="Brottier P."/>
            <person name="Wincker P."/>
            <person name="Cattolico L."/>
            <person name="Weissenbach J."/>
            <person name="Saurin W."/>
            <person name="Quetier F."/>
            <person name="Schaefer M."/>
            <person name="Mueller-Auer S."/>
            <person name="Gabel C."/>
            <person name="Fuchs M."/>
            <person name="Benes V."/>
            <person name="Wurmbach E."/>
            <person name="Drzonek H."/>
            <person name="Erfle H."/>
            <person name="Jordan N."/>
            <person name="Bangert S."/>
            <person name="Wiedelmann R."/>
            <person name="Kranz H."/>
            <person name="Voss H."/>
            <person name="Holland R."/>
            <person name="Brandt P."/>
            <person name="Nyakatura G."/>
            <person name="Vezzi A."/>
            <person name="D'Angelo M."/>
            <person name="Pallavicini A."/>
            <person name="Toppo S."/>
            <person name="Simionati B."/>
            <person name="Conrad A."/>
            <person name="Hornischer K."/>
            <person name="Kauer G."/>
            <person name="Loehnert T.-H."/>
            <person name="Nordsiek G."/>
            <person name="Reichelt J."/>
            <person name="Scharfe M."/>
            <person name="Schoen O."/>
            <person name="Bargues M."/>
            <person name="Terol J."/>
            <person name="Climent J."/>
            <person name="Navarro P."/>
            <person name="Collado C."/>
            <person name="Perez-Perez A."/>
            <person name="Ottenwaelder B."/>
            <person name="Duchemin D."/>
            <person name="Cooke R."/>
            <person name="Laudie M."/>
            <person name="Berger-Llauro C."/>
            <person name="Purnelle B."/>
            <person name="Masuy D."/>
            <person name="de Haan M."/>
            <person name="Maarse A.C."/>
            <person name="Alcaraz J.-P."/>
            <person name="Cottet A."/>
            <person name="Casacuberta E."/>
            <person name="Monfort A."/>
            <person name="Argiriou A."/>
            <person name="Flores M."/>
            <person name="Liguori R."/>
            <person name="Vitale D."/>
            <person name="Mannhaupt G."/>
            <person name="Haase D."/>
            <person name="Schoof H."/>
            <person name="Rudd S."/>
            <person name="Zaccaria P."/>
            <person name="Mewes H.-W."/>
            <person name="Mayer K.F.X."/>
            <person name="Kaul S."/>
            <person name="Town C.D."/>
            <person name="Koo H.L."/>
            <person name="Tallon L.J."/>
            <person name="Jenkins J."/>
            <person name="Rooney T."/>
            <person name="Rizzo M."/>
            <person name="Walts A."/>
            <person name="Utterback T."/>
            <person name="Fujii C.Y."/>
            <person name="Shea T.P."/>
            <person name="Creasy T.H."/>
            <person name="Haas B."/>
            <person name="Maiti R."/>
            <person name="Wu D."/>
            <person name="Peterson J."/>
            <person name="Van Aken S."/>
            <person name="Pai G."/>
            <person name="Militscher J."/>
            <person name="Sellers P."/>
            <person name="Gill J.E."/>
            <person name="Feldblyum T.V."/>
            <person name="Preuss D."/>
            <person name="Lin X."/>
            <person name="Nierman W.C."/>
            <person name="Salzberg S.L."/>
            <person name="White O."/>
            <person name="Venter J.C."/>
            <person name="Fraser C.M."/>
            <person name="Kaneko T."/>
            <person name="Nakamura Y."/>
            <person name="Sato S."/>
            <person name="Kato T."/>
            <person name="Asamizu E."/>
            <person name="Sasamoto S."/>
            <person name="Kimura T."/>
            <person name="Idesawa K."/>
            <person name="Kawashima K."/>
            <person name="Kishida Y."/>
            <person name="Kiyokawa C."/>
            <person name="Kohara M."/>
            <person name="Matsumoto M."/>
            <person name="Matsuno A."/>
            <person name="Muraki A."/>
            <person name="Nakayama S."/>
            <person name="Nakazaki N."/>
            <person name="Shinpo S."/>
            <person name="Takeuchi C."/>
            <person name="Wada T."/>
            <person name="Watanabe A."/>
            <person name="Yamada M."/>
            <person name="Yasuda M."/>
            <person name="Tabata S."/>
        </authorList>
    </citation>
    <scope>NUCLEOTIDE SEQUENCE [LARGE SCALE GENOMIC DNA]</scope>
    <source>
        <strain>cv. Columbia</strain>
    </source>
</reference>
<reference key="2">
    <citation type="journal article" date="2017" name="Plant J.">
        <title>Araport11: a complete reannotation of the Arabidopsis thaliana reference genome.</title>
        <authorList>
            <person name="Cheng C.Y."/>
            <person name="Krishnakumar V."/>
            <person name="Chan A.P."/>
            <person name="Thibaud-Nissen F."/>
            <person name="Schobel S."/>
            <person name="Town C.D."/>
        </authorList>
    </citation>
    <scope>GENOME REANNOTATION</scope>
    <source>
        <strain>cv. Columbia</strain>
    </source>
</reference>
<reference key="3">
    <citation type="journal article" date="2001" name="J. Biol. Chem.">
        <title>Phylogenetic analysis of the UDP-glycosyltransferase multigene family of Arabidopsis thaliana.</title>
        <authorList>
            <person name="Li Y."/>
            <person name="Baldauf S."/>
            <person name="Lim E.K."/>
            <person name="Bowles D.J."/>
        </authorList>
    </citation>
    <scope>GENE FAMILY</scope>
</reference>
<evidence type="ECO:0000250" key="1"/>
<evidence type="ECO:0000305" key="2"/>
<comment type="similarity">
    <text evidence="2">Belongs to the UDP-glycosyltransferase family.</text>
</comment>
<feature type="chain" id="PRO_0000409090" description="UDP-glycosyltransferase 76E5">
    <location>
        <begin position="1"/>
        <end position="447"/>
    </location>
</feature>
<feature type="binding site" evidence="1">
    <location>
        <position position="272"/>
    </location>
    <ligand>
        <name>UDP-alpha-D-glucose</name>
        <dbReference type="ChEBI" id="CHEBI:58885"/>
    </ligand>
</feature>
<feature type="binding site" evidence="1">
    <location>
        <begin position="324"/>
        <end position="326"/>
    </location>
    <ligand>
        <name>UDP-alpha-D-glucose</name>
        <dbReference type="ChEBI" id="CHEBI:58885"/>
    </ligand>
</feature>
<feature type="binding site" evidence="1">
    <location>
        <begin position="341"/>
        <end position="349"/>
    </location>
    <ligand>
        <name>UDP-alpha-D-glucose</name>
        <dbReference type="ChEBI" id="CHEBI:58885"/>
    </ligand>
</feature>
<feature type="binding site" evidence="1">
    <location>
        <begin position="363"/>
        <end position="366"/>
    </location>
    <ligand>
        <name>UDP-alpha-D-glucose</name>
        <dbReference type="ChEBI" id="CHEBI:58885"/>
    </ligand>
</feature>
<accession>Q9STE6</accession>